<name>TRBI_RHIRD</name>
<gene>
    <name type="primary">trbI</name>
</gene>
<keyword id="KW-0184">Conjugation</keyword>
<keyword id="KW-0472">Membrane</keyword>
<keyword id="KW-0614">Plasmid</keyword>
<keyword id="KW-0812">Transmembrane</keyword>
<keyword id="KW-1133">Transmembrane helix</keyword>
<comment type="subcellular location">
    <subcellularLocation>
        <location evidence="3">Membrane</location>
        <topology evidence="3">Single-pass membrane protein</topology>
    </subcellularLocation>
</comment>
<comment type="similarity">
    <text evidence="3">Belongs to the TrbI/VirB10 family.</text>
</comment>
<accession>P54917</accession>
<reference key="1">
    <citation type="journal article" date="1996" name="J. Bacteriol.">
        <title>The conjugal transfer system of Agrobacterium tumefaciens octopine-type Ti plasmids is closely related to the transfer system of an IncP plasmid and distantly related to Ti plasmid vir genes.</title>
        <authorList>
            <person name="Alt-Morbe J."/>
            <person name="Stryker J.L."/>
            <person name="Fuqua C."/>
            <person name="Li P.L."/>
            <person name="Farrand S.K."/>
            <person name="Winans S.C."/>
        </authorList>
    </citation>
    <scope>NUCLEOTIDE SEQUENCE [GENOMIC DNA]</scope>
</reference>
<feature type="chain" id="PRO_0000065617" description="Conjugal transfer protein TrbI">
    <location>
        <begin position="1"/>
        <end position="433"/>
    </location>
</feature>
<feature type="transmembrane region" description="Helical" evidence="1">
    <location>
        <begin position="25"/>
        <end position="45"/>
    </location>
</feature>
<feature type="region of interest" description="Disordered" evidence="2">
    <location>
        <begin position="84"/>
        <end position="124"/>
    </location>
</feature>
<feature type="compositionally biased region" description="Low complexity" evidence="2">
    <location>
        <begin position="85"/>
        <end position="95"/>
    </location>
</feature>
<feature type="compositionally biased region" description="Basic and acidic residues" evidence="2">
    <location>
        <begin position="114"/>
        <end position="124"/>
    </location>
</feature>
<proteinExistence type="inferred from homology"/>
<sequence>MVQSLNLGGAQNSQAASGIRRINRLPIVVVIVLAVAFLGIIFYGLASRGLYFGRDKGPESSSGEPASTFADQIKRGVTDGIIGEPQQQTTFQPTPVETKQVDEKASNPFTPTPEQRRGQELEPEAVWRARLEREQQEQYLRERQRQRMARLQANDAAYDAPLAIDRGKLEARTATDDTSAANTSTAISPTAGASDLYAAALRAGLGGQNIDPNGQKSKEDFFNTDLKDLGYLPNRVVPQQSLYELKRGSVIPATLITGINSDLPGRITAQVSQNVYDSATGHRLLIPQGTKLFGRYDSKVSFGQSRVLVVWSDIIFPNGSTLQIVGMAGTDAEGYGGFKDKVNNHYFKTFGSAVMIALIGTGIDMSVPQSSTLATQDTASDAARRNFAETFGRVADRTIQRNMDVQPTLEIRPGYKFNVLVDQDIIFNGIYRN</sequence>
<evidence type="ECO:0000255" key="1"/>
<evidence type="ECO:0000256" key="2">
    <source>
        <dbReference type="SAM" id="MobiDB-lite"/>
    </source>
</evidence>
<evidence type="ECO:0000305" key="3"/>
<protein>
    <recommendedName>
        <fullName>Conjugal transfer protein TrbI</fullName>
    </recommendedName>
</protein>
<geneLocation type="plasmid">
    <name>pTiA6NC</name>
</geneLocation>
<organism>
    <name type="scientific">Rhizobium radiobacter</name>
    <name type="common">Agrobacterium tumefaciens</name>
    <name type="synonym">Agrobacterium radiobacter</name>
    <dbReference type="NCBI Taxonomy" id="358"/>
    <lineage>
        <taxon>Bacteria</taxon>
        <taxon>Pseudomonadati</taxon>
        <taxon>Pseudomonadota</taxon>
        <taxon>Alphaproteobacteria</taxon>
        <taxon>Hyphomicrobiales</taxon>
        <taxon>Rhizobiaceae</taxon>
        <taxon>Rhizobium/Agrobacterium group</taxon>
        <taxon>Agrobacterium</taxon>
        <taxon>Agrobacterium tumefaciens complex</taxon>
    </lineage>
</organism>
<dbReference type="EMBL" id="AF242881">
    <property type="protein sequence ID" value="AAB95093.1"/>
    <property type="molecule type" value="Genomic_DNA"/>
</dbReference>
<dbReference type="RefSeq" id="NP_059750.1">
    <property type="nucleotide sequence ID" value="NC_002377.1"/>
</dbReference>
<dbReference type="RefSeq" id="WP_010892438.1">
    <property type="nucleotide sequence ID" value="NZ_QSNU01000012.1"/>
</dbReference>
<dbReference type="SMR" id="P54917"/>
<dbReference type="OrthoDB" id="9807354at2"/>
<dbReference type="GO" id="GO:0016020">
    <property type="term" value="C:membrane"/>
    <property type="evidence" value="ECO:0007669"/>
    <property type="project" value="UniProtKB-SubCell"/>
</dbReference>
<dbReference type="CDD" id="cd16429">
    <property type="entry name" value="VirB10"/>
    <property type="match status" value="1"/>
</dbReference>
<dbReference type="Gene3D" id="2.40.128.260">
    <property type="entry name" value="Type IV secretion system, VirB10/TraB/TrbI"/>
    <property type="match status" value="1"/>
</dbReference>
<dbReference type="InterPro" id="IPR005498">
    <property type="entry name" value="T4SS_VirB10/TraB/TrbI"/>
</dbReference>
<dbReference type="InterPro" id="IPR042217">
    <property type="entry name" value="T4SS_VirB10/TrbI"/>
</dbReference>
<dbReference type="NCBIfam" id="NF010405">
    <property type="entry name" value="PRK13831.1"/>
    <property type="match status" value="1"/>
</dbReference>
<dbReference type="Pfam" id="PF03743">
    <property type="entry name" value="TrbI"/>
    <property type="match status" value="1"/>
</dbReference>